<gene>
    <name type="ordered locus">MJ0003</name>
</gene>
<name>Y003_METJA</name>
<keyword id="KW-1185">Reference proteome</keyword>
<protein>
    <recommendedName>
        <fullName>Uncharacterized protein MJ0003</fullName>
    </recommendedName>
</protein>
<feature type="chain" id="PRO_0000106646" description="Uncharacterized protein MJ0003">
    <location>
        <begin position="1"/>
        <end position="156"/>
    </location>
</feature>
<sequence>MKGKRIAIVSHRILNQNSVVNGLERAEGAFNEVVEILLKNNYGIIQLPCPELIYLGIDREGKTKEEYDTKEYRELCKKLLEPIIKYLQEYKKDNYKFILIGIENSTTCDIFKNRGILMEEFFKEVEKLNIIIKAIEYPKNEKDYNKFVKTLEKMIK</sequence>
<accession>Q60313</accession>
<dbReference type="EMBL" id="L77117">
    <property type="protein sequence ID" value="AAB97990.1"/>
    <property type="molecule type" value="Genomic_DNA"/>
</dbReference>
<dbReference type="PIR" id="C64300">
    <property type="entry name" value="C64300"/>
</dbReference>
<dbReference type="RefSeq" id="WP_010869496.1">
    <property type="nucleotide sequence ID" value="NC_000909.1"/>
</dbReference>
<dbReference type="STRING" id="243232.MJ_0003"/>
<dbReference type="PaxDb" id="243232-MJ_0003"/>
<dbReference type="EnsemblBacteria" id="AAB97990">
    <property type="protein sequence ID" value="AAB97990"/>
    <property type="gene ID" value="MJ_0003"/>
</dbReference>
<dbReference type="GeneID" id="1450842"/>
<dbReference type="KEGG" id="mja:MJ_0003"/>
<dbReference type="eggNOG" id="arCOG02433">
    <property type="taxonomic scope" value="Archaea"/>
</dbReference>
<dbReference type="HOGENOM" id="CLU_120866_1_0_2"/>
<dbReference type="InParanoid" id="Q60313"/>
<dbReference type="OrthoDB" id="240616at2157"/>
<dbReference type="PhylomeDB" id="Q60313"/>
<dbReference type="Proteomes" id="UP000000805">
    <property type="component" value="Chromosome"/>
</dbReference>
<dbReference type="InterPro" id="IPR054648">
    <property type="entry name" value="TudS-rel"/>
</dbReference>
<dbReference type="NCBIfam" id="NF045597">
    <property type="entry name" value="TudS_rel_CD3072"/>
    <property type="match status" value="1"/>
</dbReference>
<organism>
    <name type="scientific">Methanocaldococcus jannaschii (strain ATCC 43067 / DSM 2661 / JAL-1 / JCM 10045 / NBRC 100440)</name>
    <name type="common">Methanococcus jannaschii</name>
    <dbReference type="NCBI Taxonomy" id="243232"/>
    <lineage>
        <taxon>Archaea</taxon>
        <taxon>Methanobacteriati</taxon>
        <taxon>Methanobacteriota</taxon>
        <taxon>Methanomada group</taxon>
        <taxon>Methanococci</taxon>
        <taxon>Methanococcales</taxon>
        <taxon>Methanocaldococcaceae</taxon>
        <taxon>Methanocaldococcus</taxon>
    </lineage>
</organism>
<proteinExistence type="predicted"/>
<reference key="1">
    <citation type="journal article" date="1996" name="Science">
        <title>Complete genome sequence of the methanogenic archaeon, Methanococcus jannaschii.</title>
        <authorList>
            <person name="Bult C.J."/>
            <person name="White O."/>
            <person name="Olsen G.J."/>
            <person name="Zhou L."/>
            <person name="Fleischmann R.D."/>
            <person name="Sutton G.G."/>
            <person name="Blake J.A."/>
            <person name="FitzGerald L.M."/>
            <person name="Clayton R.A."/>
            <person name="Gocayne J.D."/>
            <person name="Kerlavage A.R."/>
            <person name="Dougherty B.A."/>
            <person name="Tomb J.-F."/>
            <person name="Adams M.D."/>
            <person name="Reich C.I."/>
            <person name="Overbeek R."/>
            <person name="Kirkness E.F."/>
            <person name="Weinstock K.G."/>
            <person name="Merrick J.M."/>
            <person name="Glodek A."/>
            <person name="Scott J.L."/>
            <person name="Geoghagen N.S.M."/>
            <person name="Weidman J.F."/>
            <person name="Fuhrmann J.L."/>
            <person name="Nguyen D."/>
            <person name="Utterback T.R."/>
            <person name="Kelley J.M."/>
            <person name="Peterson J.D."/>
            <person name="Sadow P.W."/>
            <person name="Hanna M.C."/>
            <person name="Cotton M.D."/>
            <person name="Roberts K.M."/>
            <person name="Hurst M.A."/>
            <person name="Kaine B.P."/>
            <person name="Borodovsky M."/>
            <person name="Klenk H.-P."/>
            <person name="Fraser C.M."/>
            <person name="Smith H.O."/>
            <person name="Woese C.R."/>
            <person name="Venter J.C."/>
        </authorList>
    </citation>
    <scope>NUCLEOTIDE SEQUENCE [LARGE SCALE GENOMIC DNA]</scope>
    <source>
        <strain>ATCC 43067 / DSM 2661 / JAL-1 / JCM 10045 / NBRC 100440</strain>
    </source>
</reference>